<accession>A4GG95</accession>
<accession>A8W822</accession>
<protein>
    <recommendedName>
        <fullName evidence="2">Small ribosomal subunit protein uS4c</fullName>
    </recommendedName>
    <alternativeName>
        <fullName>30S ribosomal protein S4, chloroplastic</fullName>
    </alternativeName>
</protein>
<reference key="1">
    <citation type="journal article" date="2007" name="BMC Genomics">
        <title>Rapid evolutionary change of common bean (Phaseolus vulgaris L) plastome, and the genomic diversification of legume chloroplasts.</title>
        <authorList>
            <person name="Guo X."/>
            <person name="Castillo-Ramirez S."/>
            <person name="Gonzalez V."/>
            <person name="Bustos P."/>
            <person name="Fernandez-Vazquez J.L."/>
            <person name="Santamaria R.I."/>
            <person name="Arellano J."/>
            <person name="Cevallos M.A."/>
            <person name="Davila G."/>
        </authorList>
    </citation>
    <scope>NUCLEOTIDE SEQUENCE [LARGE SCALE GENOMIC DNA]</scope>
    <source>
        <strain>cv. Negro Jamapa</strain>
    </source>
</reference>
<reference key="2">
    <citation type="submission" date="2007-10" db="EMBL/GenBank/DDBJ databases">
        <title>Complete nucleotide sequence of the plastid genome of the common bean, Phaseolus vulgaris.</title>
        <authorList>
            <person name="Moore M.J."/>
            <person name="Triplett E.W."/>
            <person name="Broughton W.J."/>
            <person name="Soltis P.S."/>
            <person name="Soltis D.E."/>
        </authorList>
    </citation>
    <scope>NUCLEOTIDE SEQUENCE [LARGE SCALE GENOMIC DNA]</scope>
</reference>
<comment type="function">
    <text evidence="1">One of the primary rRNA binding proteins, it binds directly to 16S rRNA where it nucleates assembly of the body of the 30S subunit.</text>
</comment>
<comment type="function">
    <text evidence="1">With S5 and S12 plays an important role in translational accuracy.</text>
</comment>
<comment type="subunit">
    <text evidence="1">Part of the 30S ribosomal subunit. Contacts protein S5. The interaction surface between S4 and S5 is involved in control of translational fidelity (By similarity).</text>
</comment>
<comment type="subcellular location">
    <subcellularLocation>
        <location>Plastid</location>
        <location>Chloroplast</location>
    </subcellularLocation>
</comment>
<comment type="similarity">
    <text evidence="2">Belongs to the universal ribosomal protein uS4 family.</text>
</comment>
<feature type="chain" id="PRO_0000293434" description="Small ribosomal subunit protein uS4c">
    <location>
        <begin position="1"/>
        <end position="201"/>
    </location>
</feature>
<feature type="domain" description="S4 RNA-binding">
    <location>
        <begin position="89"/>
        <end position="151"/>
    </location>
</feature>
<geneLocation type="chloroplast"/>
<gene>
    <name type="primary">rps4</name>
</gene>
<proteinExistence type="inferred from homology"/>
<evidence type="ECO:0000250" key="1"/>
<evidence type="ECO:0000305" key="2"/>
<organism>
    <name type="scientific">Phaseolus vulgaris</name>
    <name type="common">Kidney bean</name>
    <name type="synonym">French bean</name>
    <dbReference type="NCBI Taxonomy" id="3885"/>
    <lineage>
        <taxon>Eukaryota</taxon>
        <taxon>Viridiplantae</taxon>
        <taxon>Streptophyta</taxon>
        <taxon>Embryophyta</taxon>
        <taxon>Tracheophyta</taxon>
        <taxon>Spermatophyta</taxon>
        <taxon>Magnoliopsida</taxon>
        <taxon>eudicotyledons</taxon>
        <taxon>Gunneridae</taxon>
        <taxon>Pentapetalae</taxon>
        <taxon>rosids</taxon>
        <taxon>fabids</taxon>
        <taxon>Fabales</taxon>
        <taxon>Fabaceae</taxon>
        <taxon>Papilionoideae</taxon>
        <taxon>50 kb inversion clade</taxon>
        <taxon>NPAAA clade</taxon>
        <taxon>indigoferoid/millettioid clade</taxon>
        <taxon>Phaseoleae</taxon>
        <taxon>Phaseolus</taxon>
    </lineage>
</organism>
<name>RR4_PHAVU</name>
<keyword id="KW-0150">Chloroplast</keyword>
<keyword id="KW-0934">Plastid</keyword>
<keyword id="KW-0687">Ribonucleoprotein</keyword>
<keyword id="KW-0689">Ribosomal protein</keyword>
<keyword id="KW-0694">RNA-binding</keyword>
<keyword id="KW-0699">rRNA-binding</keyword>
<dbReference type="EMBL" id="DQ886273">
    <property type="protein sequence ID" value="ABH88076.1"/>
    <property type="molecule type" value="Genomic_DNA"/>
</dbReference>
<dbReference type="EMBL" id="EU196765">
    <property type="protein sequence ID" value="ABW22792.1"/>
    <property type="molecule type" value="Genomic_DNA"/>
</dbReference>
<dbReference type="RefSeq" id="YP_001122796.1">
    <property type="nucleotide sequence ID" value="NC_009259.1"/>
</dbReference>
<dbReference type="SMR" id="A4GG95"/>
<dbReference type="GeneID" id="4961741"/>
<dbReference type="KEGG" id="pvu:4961741"/>
<dbReference type="eggNOG" id="KOG3301">
    <property type="taxonomic scope" value="Eukaryota"/>
</dbReference>
<dbReference type="GO" id="GO:0009507">
    <property type="term" value="C:chloroplast"/>
    <property type="evidence" value="ECO:0007669"/>
    <property type="project" value="UniProtKB-SubCell"/>
</dbReference>
<dbReference type="GO" id="GO:0015935">
    <property type="term" value="C:small ribosomal subunit"/>
    <property type="evidence" value="ECO:0007669"/>
    <property type="project" value="InterPro"/>
</dbReference>
<dbReference type="GO" id="GO:0019843">
    <property type="term" value="F:rRNA binding"/>
    <property type="evidence" value="ECO:0007669"/>
    <property type="project" value="UniProtKB-UniRule"/>
</dbReference>
<dbReference type="GO" id="GO:0003735">
    <property type="term" value="F:structural constituent of ribosome"/>
    <property type="evidence" value="ECO:0007669"/>
    <property type="project" value="InterPro"/>
</dbReference>
<dbReference type="GO" id="GO:0042274">
    <property type="term" value="P:ribosomal small subunit biogenesis"/>
    <property type="evidence" value="ECO:0007669"/>
    <property type="project" value="TreeGrafter"/>
</dbReference>
<dbReference type="GO" id="GO:0006412">
    <property type="term" value="P:translation"/>
    <property type="evidence" value="ECO:0007669"/>
    <property type="project" value="UniProtKB-UniRule"/>
</dbReference>
<dbReference type="CDD" id="cd00165">
    <property type="entry name" value="S4"/>
    <property type="match status" value="1"/>
</dbReference>
<dbReference type="FunFam" id="1.10.1050.10:FF:000002">
    <property type="entry name" value="30S ribosomal protein S4, chloroplastic"/>
    <property type="match status" value="1"/>
</dbReference>
<dbReference type="FunFam" id="3.10.290.10:FF:000081">
    <property type="entry name" value="30S ribosomal protein S4, chloroplastic"/>
    <property type="match status" value="1"/>
</dbReference>
<dbReference type="Gene3D" id="1.10.1050.10">
    <property type="entry name" value="Ribosomal Protein S4 Delta 41, Chain A, domain 1"/>
    <property type="match status" value="1"/>
</dbReference>
<dbReference type="Gene3D" id="3.10.290.10">
    <property type="entry name" value="RNA-binding S4 domain"/>
    <property type="match status" value="1"/>
</dbReference>
<dbReference type="HAMAP" id="MF_01306_B">
    <property type="entry name" value="Ribosomal_uS4_B"/>
    <property type="match status" value="1"/>
</dbReference>
<dbReference type="InterPro" id="IPR022801">
    <property type="entry name" value="Ribosomal_uS4"/>
</dbReference>
<dbReference type="InterPro" id="IPR005709">
    <property type="entry name" value="Ribosomal_uS4_bac-type"/>
</dbReference>
<dbReference type="InterPro" id="IPR018079">
    <property type="entry name" value="Ribosomal_uS4_CS"/>
</dbReference>
<dbReference type="InterPro" id="IPR001912">
    <property type="entry name" value="Ribosomal_uS4_N"/>
</dbReference>
<dbReference type="InterPro" id="IPR002942">
    <property type="entry name" value="S4_RNA-bd"/>
</dbReference>
<dbReference type="InterPro" id="IPR036986">
    <property type="entry name" value="S4_RNA-bd_sf"/>
</dbReference>
<dbReference type="NCBIfam" id="NF003717">
    <property type="entry name" value="PRK05327.1"/>
    <property type="match status" value="1"/>
</dbReference>
<dbReference type="NCBIfam" id="TIGR01017">
    <property type="entry name" value="rpsD_bact"/>
    <property type="match status" value="1"/>
</dbReference>
<dbReference type="PANTHER" id="PTHR11831">
    <property type="entry name" value="30S 40S RIBOSOMAL PROTEIN"/>
    <property type="match status" value="1"/>
</dbReference>
<dbReference type="PANTHER" id="PTHR11831:SF4">
    <property type="entry name" value="SMALL RIBOSOMAL SUBUNIT PROTEIN US4M"/>
    <property type="match status" value="1"/>
</dbReference>
<dbReference type="Pfam" id="PF00163">
    <property type="entry name" value="Ribosomal_S4"/>
    <property type="match status" value="1"/>
</dbReference>
<dbReference type="Pfam" id="PF01479">
    <property type="entry name" value="S4"/>
    <property type="match status" value="1"/>
</dbReference>
<dbReference type="SMART" id="SM01390">
    <property type="entry name" value="Ribosomal_S4"/>
    <property type="match status" value="1"/>
</dbReference>
<dbReference type="SMART" id="SM00363">
    <property type="entry name" value="S4"/>
    <property type="match status" value="1"/>
</dbReference>
<dbReference type="SUPFAM" id="SSF55174">
    <property type="entry name" value="Alpha-L RNA-binding motif"/>
    <property type="match status" value="1"/>
</dbReference>
<dbReference type="PROSITE" id="PS00632">
    <property type="entry name" value="RIBOSOMAL_S4"/>
    <property type="match status" value="1"/>
</dbReference>
<dbReference type="PROSITE" id="PS50889">
    <property type="entry name" value="S4"/>
    <property type="match status" value="1"/>
</dbReference>
<sequence>MSRYRGPCFKKIRRLGYLPGLTSKKPTVKNELRNQLRFSKKSQYRIRLEEKQKLRFHYGLTERQLLKYVRISGKAKGSTGQVLLQLLEMRLDNILFRLGMAATIPQARQFINHRHVLVNGRIVDIPSYRCKPQDIITAKDEQKSKTLIQNYLDSAPRDKLPNHLTVHPFQYKGLINQIIDNKWVGLKINELLVVEYYSRQT</sequence>